<reference key="1">
    <citation type="journal article" date="2001" name="Nature">
        <title>Complete genome sequence of a multiple drug resistant Salmonella enterica serovar Typhi CT18.</title>
        <authorList>
            <person name="Parkhill J."/>
            <person name="Dougan G."/>
            <person name="James K.D."/>
            <person name="Thomson N.R."/>
            <person name="Pickard D."/>
            <person name="Wain J."/>
            <person name="Churcher C.M."/>
            <person name="Mungall K.L."/>
            <person name="Bentley S.D."/>
            <person name="Holden M.T.G."/>
            <person name="Sebaihia M."/>
            <person name="Baker S."/>
            <person name="Basham D."/>
            <person name="Brooks K."/>
            <person name="Chillingworth T."/>
            <person name="Connerton P."/>
            <person name="Cronin A."/>
            <person name="Davis P."/>
            <person name="Davies R.M."/>
            <person name="Dowd L."/>
            <person name="White N."/>
            <person name="Farrar J."/>
            <person name="Feltwell T."/>
            <person name="Hamlin N."/>
            <person name="Haque A."/>
            <person name="Hien T.T."/>
            <person name="Holroyd S."/>
            <person name="Jagels K."/>
            <person name="Krogh A."/>
            <person name="Larsen T.S."/>
            <person name="Leather S."/>
            <person name="Moule S."/>
            <person name="O'Gaora P."/>
            <person name="Parry C."/>
            <person name="Quail M.A."/>
            <person name="Rutherford K.M."/>
            <person name="Simmonds M."/>
            <person name="Skelton J."/>
            <person name="Stevens K."/>
            <person name="Whitehead S."/>
            <person name="Barrell B.G."/>
        </authorList>
    </citation>
    <scope>NUCLEOTIDE SEQUENCE [LARGE SCALE GENOMIC DNA]</scope>
    <source>
        <strain>CT18</strain>
    </source>
</reference>
<reference key="2">
    <citation type="journal article" date="2003" name="J. Bacteriol.">
        <title>Comparative genomics of Salmonella enterica serovar Typhi strains Ty2 and CT18.</title>
        <authorList>
            <person name="Deng W."/>
            <person name="Liou S.-R."/>
            <person name="Plunkett G. III"/>
            <person name="Mayhew G.F."/>
            <person name="Rose D.J."/>
            <person name="Burland V."/>
            <person name="Kodoyianni V."/>
            <person name="Schwartz D.C."/>
            <person name="Blattner F.R."/>
        </authorList>
    </citation>
    <scope>NUCLEOTIDE SEQUENCE [LARGE SCALE GENOMIC DNA]</scope>
    <source>
        <strain>ATCC 700931 / Ty2</strain>
    </source>
</reference>
<dbReference type="EC" id="2.7.4.6" evidence="2"/>
<dbReference type="EMBL" id="AL513382">
    <property type="protein sequence ID" value="CAD02729.1"/>
    <property type="molecule type" value="Genomic_DNA"/>
</dbReference>
<dbReference type="EMBL" id="AE014613">
    <property type="protein sequence ID" value="AAO68053.1"/>
    <property type="molecule type" value="Genomic_DNA"/>
</dbReference>
<dbReference type="RefSeq" id="NP_457058.1">
    <property type="nucleotide sequence ID" value="NC_003198.1"/>
</dbReference>
<dbReference type="RefSeq" id="WP_000963846.1">
    <property type="nucleotide sequence ID" value="NZ_WSUR01000007.1"/>
</dbReference>
<dbReference type="SMR" id="P65535"/>
<dbReference type="STRING" id="220341.gene:17586663"/>
<dbReference type="KEGG" id="stt:t0330"/>
<dbReference type="KEGG" id="sty:STY2771"/>
<dbReference type="PATRIC" id="fig|220341.7.peg.2813"/>
<dbReference type="eggNOG" id="COG0105">
    <property type="taxonomic scope" value="Bacteria"/>
</dbReference>
<dbReference type="HOGENOM" id="CLU_060216_8_1_6"/>
<dbReference type="OMA" id="QHYGEHK"/>
<dbReference type="OrthoDB" id="9801161at2"/>
<dbReference type="Proteomes" id="UP000000541">
    <property type="component" value="Chromosome"/>
</dbReference>
<dbReference type="Proteomes" id="UP000002670">
    <property type="component" value="Chromosome"/>
</dbReference>
<dbReference type="GO" id="GO:0005737">
    <property type="term" value="C:cytoplasm"/>
    <property type="evidence" value="ECO:0007669"/>
    <property type="project" value="UniProtKB-SubCell"/>
</dbReference>
<dbReference type="GO" id="GO:0005524">
    <property type="term" value="F:ATP binding"/>
    <property type="evidence" value="ECO:0007669"/>
    <property type="project" value="UniProtKB-UniRule"/>
</dbReference>
<dbReference type="GO" id="GO:0046872">
    <property type="term" value="F:metal ion binding"/>
    <property type="evidence" value="ECO:0007669"/>
    <property type="project" value="UniProtKB-KW"/>
</dbReference>
<dbReference type="GO" id="GO:0004550">
    <property type="term" value="F:nucleoside diphosphate kinase activity"/>
    <property type="evidence" value="ECO:0007669"/>
    <property type="project" value="UniProtKB-UniRule"/>
</dbReference>
<dbReference type="GO" id="GO:0006241">
    <property type="term" value="P:CTP biosynthetic process"/>
    <property type="evidence" value="ECO:0007669"/>
    <property type="project" value="UniProtKB-UniRule"/>
</dbReference>
<dbReference type="GO" id="GO:0006183">
    <property type="term" value="P:GTP biosynthetic process"/>
    <property type="evidence" value="ECO:0007669"/>
    <property type="project" value="UniProtKB-UniRule"/>
</dbReference>
<dbReference type="GO" id="GO:0006228">
    <property type="term" value="P:UTP biosynthetic process"/>
    <property type="evidence" value="ECO:0007669"/>
    <property type="project" value="UniProtKB-UniRule"/>
</dbReference>
<dbReference type="CDD" id="cd04413">
    <property type="entry name" value="NDPk_I"/>
    <property type="match status" value="1"/>
</dbReference>
<dbReference type="FunFam" id="3.30.70.141:FF:000001">
    <property type="entry name" value="Nucleoside diphosphate kinase"/>
    <property type="match status" value="1"/>
</dbReference>
<dbReference type="Gene3D" id="3.30.70.141">
    <property type="entry name" value="Nucleoside diphosphate kinase-like domain"/>
    <property type="match status" value="1"/>
</dbReference>
<dbReference type="HAMAP" id="MF_00451">
    <property type="entry name" value="NDP_kinase"/>
    <property type="match status" value="1"/>
</dbReference>
<dbReference type="InterPro" id="IPR034907">
    <property type="entry name" value="NDK-like_dom"/>
</dbReference>
<dbReference type="InterPro" id="IPR036850">
    <property type="entry name" value="NDK-like_dom_sf"/>
</dbReference>
<dbReference type="InterPro" id="IPR001564">
    <property type="entry name" value="Nucleoside_diP_kinase"/>
</dbReference>
<dbReference type="InterPro" id="IPR023005">
    <property type="entry name" value="Nucleoside_diP_kinase_AS"/>
</dbReference>
<dbReference type="NCBIfam" id="NF001908">
    <property type="entry name" value="PRK00668.1"/>
    <property type="match status" value="1"/>
</dbReference>
<dbReference type="PANTHER" id="PTHR46161">
    <property type="entry name" value="NUCLEOSIDE DIPHOSPHATE KINASE"/>
    <property type="match status" value="1"/>
</dbReference>
<dbReference type="PANTHER" id="PTHR46161:SF3">
    <property type="entry name" value="NUCLEOSIDE DIPHOSPHATE KINASE DDB_G0292928-RELATED"/>
    <property type="match status" value="1"/>
</dbReference>
<dbReference type="Pfam" id="PF00334">
    <property type="entry name" value="NDK"/>
    <property type="match status" value="1"/>
</dbReference>
<dbReference type="PRINTS" id="PR01243">
    <property type="entry name" value="NUCDPKINASE"/>
</dbReference>
<dbReference type="SMART" id="SM00562">
    <property type="entry name" value="NDK"/>
    <property type="match status" value="1"/>
</dbReference>
<dbReference type="SUPFAM" id="SSF54919">
    <property type="entry name" value="Nucleoside diphosphate kinase, NDK"/>
    <property type="match status" value="1"/>
</dbReference>
<dbReference type="PROSITE" id="PS00469">
    <property type="entry name" value="NDPK"/>
    <property type="match status" value="1"/>
</dbReference>
<dbReference type="PROSITE" id="PS51374">
    <property type="entry name" value="NDPK_LIKE"/>
    <property type="match status" value="1"/>
</dbReference>
<sequence length="143" mass="15522">MAIERTFSIIKPNAVAKNVIGSIFARFEAAGFKIVGTKMLHLTVEQARGFYAEHDGKPFFDGLVEFMTSGPIVVSVLESENAVQRHRDLLGATNPANALAGTLRADYADSLTENGTHGSDSLESAQREIAFFFGEGEVCPRTR</sequence>
<comment type="function">
    <text evidence="2">Major role in the synthesis of nucleoside triphosphates other than ATP. The ATP gamma phosphate is transferred to the NDP beta phosphate via a ping-pong mechanism, using a phosphorylated active-site intermediate.</text>
</comment>
<comment type="catalytic activity">
    <reaction evidence="2">
        <text>a 2'-deoxyribonucleoside 5'-diphosphate + ATP = a 2'-deoxyribonucleoside 5'-triphosphate + ADP</text>
        <dbReference type="Rhea" id="RHEA:44640"/>
        <dbReference type="ChEBI" id="CHEBI:30616"/>
        <dbReference type="ChEBI" id="CHEBI:61560"/>
        <dbReference type="ChEBI" id="CHEBI:73316"/>
        <dbReference type="ChEBI" id="CHEBI:456216"/>
        <dbReference type="EC" id="2.7.4.6"/>
    </reaction>
</comment>
<comment type="catalytic activity">
    <reaction evidence="2">
        <text>a ribonucleoside 5'-diphosphate + ATP = a ribonucleoside 5'-triphosphate + ADP</text>
        <dbReference type="Rhea" id="RHEA:18113"/>
        <dbReference type="ChEBI" id="CHEBI:30616"/>
        <dbReference type="ChEBI" id="CHEBI:57930"/>
        <dbReference type="ChEBI" id="CHEBI:61557"/>
        <dbReference type="ChEBI" id="CHEBI:456216"/>
        <dbReference type="EC" id="2.7.4.6"/>
    </reaction>
</comment>
<comment type="cofactor">
    <cofactor evidence="2">
        <name>Mg(2+)</name>
        <dbReference type="ChEBI" id="CHEBI:18420"/>
    </cofactor>
</comment>
<comment type="subunit">
    <text evidence="2">Homotetramer.</text>
</comment>
<comment type="subcellular location">
    <subcellularLocation>
        <location evidence="2">Cytoplasm</location>
    </subcellularLocation>
</comment>
<comment type="similarity">
    <text evidence="2">Belongs to the NDK family.</text>
</comment>
<protein>
    <recommendedName>
        <fullName evidence="2">Nucleoside diphosphate kinase</fullName>
        <shortName evidence="2">NDK</shortName>
        <shortName evidence="2">NDP kinase</shortName>
        <ecNumber evidence="2">2.7.4.6</ecNumber>
    </recommendedName>
    <alternativeName>
        <fullName evidence="2">Nucleoside-2-P kinase</fullName>
    </alternativeName>
</protein>
<proteinExistence type="inferred from homology"/>
<name>NDK_SALTI</name>
<feature type="initiator methionine" description="Removed" evidence="1">
    <location>
        <position position="1"/>
    </location>
</feature>
<feature type="chain" id="PRO_0000137040" description="Nucleoside diphosphate kinase">
    <location>
        <begin position="2"/>
        <end position="143"/>
    </location>
</feature>
<feature type="active site" description="Pros-phosphohistidine intermediate" evidence="2">
    <location>
        <position position="117"/>
    </location>
</feature>
<feature type="binding site" evidence="2">
    <location>
        <position position="11"/>
    </location>
    <ligand>
        <name>ATP</name>
        <dbReference type="ChEBI" id="CHEBI:30616"/>
    </ligand>
</feature>
<feature type="binding site" evidence="2">
    <location>
        <position position="59"/>
    </location>
    <ligand>
        <name>ATP</name>
        <dbReference type="ChEBI" id="CHEBI:30616"/>
    </ligand>
</feature>
<feature type="binding site" evidence="2">
    <location>
        <position position="87"/>
    </location>
    <ligand>
        <name>ATP</name>
        <dbReference type="ChEBI" id="CHEBI:30616"/>
    </ligand>
</feature>
<feature type="binding site" evidence="2">
    <location>
        <position position="93"/>
    </location>
    <ligand>
        <name>ATP</name>
        <dbReference type="ChEBI" id="CHEBI:30616"/>
    </ligand>
</feature>
<feature type="binding site" evidence="2">
    <location>
        <position position="104"/>
    </location>
    <ligand>
        <name>ATP</name>
        <dbReference type="ChEBI" id="CHEBI:30616"/>
    </ligand>
</feature>
<feature type="binding site" evidence="2">
    <location>
        <position position="114"/>
    </location>
    <ligand>
        <name>ATP</name>
        <dbReference type="ChEBI" id="CHEBI:30616"/>
    </ligand>
</feature>
<accession>P65535</accession>
<accession>Q8XFN4</accession>
<keyword id="KW-0067">ATP-binding</keyword>
<keyword id="KW-0963">Cytoplasm</keyword>
<keyword id="KW-0418">Kinase</keyword>
<keyword id="KW-0460">Magnesium</keyword>
<keyword id="KW-0479">Metal-binding</keyword>
<keyword id="KW-0546">Nucleotide metabolism</keyword>
<keyword id="KW-0547">Nucleotide-binding</keyword>
<keyword id="KW-0597">Phosphoprotein</keyword>
<keyword id="KW-0808">Transferase</keyword>
<evidence type="ECO:0000250" key="1"/>
<evidence type="ECO:0000255" key="2">
    <source>
        <dbReference type="HAMAP-Rule" id="MF_00451"/>
    </source>
</evidence>
<gene>
    <name evidence="2" type="primary">ndk</name>
    <name type="ordered locus">STY2771</name>
    <name type="ordered locus">t0330</name>
</gene>
<organism>
    <name type="scientific">Salmonella typhi</name>
    <dbReference type="NCBI Taxonomy" id="90370"/>
    <lineage>
        <taxon>Bacteria</taxon>
        <taxon>Pseudomonadati</taxon>
        <taxon>Pseudomonadota</taxon>
        <taxon>Gammaproteobacteria</taxon>
        <taxon>Enterobacterales</taxon>
        <taxon>Enterobacteriaceae</taxon>
        <taxon>Salmonella</taxon>
    </lineage>
</organism>